<gene>
    <name evidence="1" type="primary">ybeY</name>
    <name type="ordered locus">GSU2284</name>
</gene>
<name>YBEY_GEOSL</name>
<organism>
    <name type="scientific">Geobacter sulfurreducens (strain ATCC 51573 / DSM 12127 / PCA)</name>
    <dbReference type="NCBI Taxonomy" id="243231"/>
    <lineage>
        <taxon>Bacteria</taxon>
        <taxon>Pseudomonadati</taxon>
        <taxon>Thermodesulfobacteriota</taxon>
        <taxon>Desulfuromonadia</taxon>
        <taxon>Geobacterales</taxon>
        <taxon>Geobacteraceae</taxon>
        <taxon>Geobacter</taxon>
    </lineage>
</organism>
<accession>Q74AR8</accession>
<reference key="1">
    <citation type="journal article" date="2003" name="Science">
        <title>Genome of Geobacter sulfurreducens: metal reduction in subsurface environments.</title>
        <authorList>
            <person name="Methe B.A."/>
            <person name="Nelson K.E."/>
            <person name="Eisen J.A."/>
            <person name="Paulsen I.T."/>
            <person name="Nelson W.C."/>
            <person name="Heidelberg J.F."/>
            <person name="Wu D."/>
            <person name="Wu M."/>
            <person name="Ward N.L."/>
            <person name="Beanan M.J."/>
            <person name="Dodson R.J."/>
            <person name="Madupu R."/>
            <person name="Brinkac L.M."/>
            <person name="Daugherty S.C."/>
            <person name="DeBoy R.T."/>
            <person name="Durkin A.S."/>
            <person name="Gwinn M.L."/>
            <person name="Kolonay J.F."/>
            <person name="Sullivan S.A."/>
            <person name="Haft D.H."/>
            <person name="Selengut J."/>
            <person name="Davidsen T.M."/>
            <person name="Zafar N."/>
            <person name="White O."/>
            <person name="Tran B."/>
            <person name="Romero C."/>
            <person name="Forberger H.A."/>
            <person name="Weidman J.F."/>
            <person name="Khouri H.M."/>
            <person name="Feldblyum T.V."/>
            <person name="Utterback T.R."/>
            <person name="Van Aken S.E."/>
            <person name="Lovley D.R."/>
            <person name="Fraser C.M."/>
        </authorList>
    </citation>
    <scope>NUCLEOTIDE SEQUENCE [LARGE SCALE GENOMIC DNA]</scope>
    <source>
        <strain>ATCC 51573 / DSM 12127 / PCA</strain>
    </source>
</reference>
<protein>
    <recommendedName>
        <fullName evidence="1">Endoribonuclease YbeY</fullName>
        <ecNumber evidence="1">3.1.-.-</ecNumber>
    </recommendedName>
</protein>
<feature type="chain" id="PRO_0000102459" description="Endoribonuclease YbeY">
    <location>
        <begin position="1"/>
        <end position="150"/>
    </location>
</feature>
<feature type="binding site" evidence="1">
    <location>
        <position position="112"/>
    </location>
    <ligand>
        <name>Zn(2+)</name>
        <dbReference type="ChEBI" id="CHEBI:29105"/>
        <note>catalytic</note>
    </ligand>
</feature>
<feature type="binding site" evidence="1">
    <location>
        <position position="116"/>
    </location>
    <ligand>
        <name>Zn(2+)</name>
        <dbReference type="ChEBI" id="CHEBI:29105"/>
        <note>catalytic</note>
    </ligand>
</feature>
<feature type="binding site" evidence="1">
    <location>
        <position position="122"/>
    </location>
    <ligand>
        <name>Zn(2+)</name>
        <dbReference type="ChEBI" id="CHEBI:29105"/>
        <note>catalytic</note>
    </ligand>
</feature>
<sequence>MKVAITNRQKRHPIGTRRLRKVAETILGALGYPDSELSVVITGDLGIRRVNRDYLGKDRPTNVISFAMGEGDFGDLNPDVLGDVIISADTAAREAEEAGIAFWSRLCFLLLHGTLHITGYDHERSGEAEARRMEAKEREIFALLENGGLV</sequence>
<evidence type="ECO:0000255" key="1">
    <source>
        <dbReference type="HAMAP-Rule" id="MF_00009"/>
    </source>
</evidence>
<comment type="function">
    <text evidence="1">Single strand-specific metallo-endoribonuclease involved in late-stage 70S ribosome quality control and in maturation of the 3' terminus of the 16S rRNA.</text>
</comment>
<comment type="cofactor">
    <cofactor evidence="1">
        <name>Zn(2+)</name>
        <dbReference type="ChEBI" id="CHEBI:29105"/>
    </cofactor>
    <text evidence="1">Binds 1 zinc ion.</text>
</comment>
<comment type="subcellular location">
    <subcellularLocation>
        <location evidence="1">Cytoplasm</location>
    </subcellularLocation>
</comment>
<comment type="similarity">
    <text evidence="1">Belongs to the endoribonuclease YbeY family.</text>
</comment>
<dbReference type="EC" id="3.1.-.-" evidence="1"/>
<dbReference type="EMBL" id="AE017180">
    <property type="protein sequence ID" value="AAR35660.2"/>
    <property type="molecule type" value="Genomic_DNA"/>
</dbReference>
<dbReference type="RefSeq" id="NP_953333.4">
    <property type="nucleotide sequence ID" value="NC_002939.5"/>
</dbReference>
<dbReference type="RefSeq" id="WP_010942921.1">
    <property type="nucleotide sequence ID" value="NC_002939.5"/>
</dbReference>
<dbReference type="SMR" id="Q74AR8"/>
<dbReference type="FunCoup" id="Q74AR8">
    <property type="interactions" value="267"/>
</dbReference>
<dbReference type="STRING" id="243231.GSU2284"/>
<dbReference type="EnsemblBacteria" id="AAR35660">
    <property type="protein sequence ID" value="AAR35660"/>
    <property type="gene ID" value="GSU2284"/>
</dbReference>
<dbReference type="KEGG" id="gsu:GSU2284"/>
<dbReference type="PATRIC" id="fig|243231.5.peg.2317"/>
<dbReference type="eggNOG" id="COG0319">
    <property type="taxonomic scope" value="Bacteria"/>
</dbReference>
<dbReference type="HOGENOM" id="CLU_106710_3_3_7"/>
<dbReference type="InParanoid" id="Q74AR8"/>
<dbReference type="OrthoDB" id="9807740at2"/>
<dbReference type="Proteomes" id="UP000000577">
    <property type="component" value="Chromosome"/>
</dbReference>
<dbReference type="GO" id="GO:0005737">
    <property type="term" value="C:cytoplasm"/>
    <property type="evidence" value="ECO:0007669"/>
    <property type="project" value="UniProtKB-SubCell"/>
</dbReference>
<dbReference type="GO" id="GO:0004222">
    <property type="term" value="F:metalloendopeptidase activity"/>
    <property type="evidence" value="ECO:0007669"/>
    <property type="project" value="InterPro"/>
</dbReference>
<dbReference type="GO" id="GO:0004521">
    <property type="term" value="F:RNA endonuclease activity"/>
    <property type="evidence" value="ECO:0007669"/>
    <property type="project" value="UniProtKB-UniRule"/>
</dbReference>
<dbReference type="GO" id="GO:0008270">
    <property type="term" value="F:zinc ion binding"/>
    <property type="evidence" value="ECO:0007669"/>
    <property type="project" value="UniProtKB-UniRule"/>
</dbReference>
<dbReference type="GO" id="GO:0006364">
    <property type="term" value="P:rRNA processing"/>
    <property type="evidence" value="ECO:0007669"/>
    <property type="project" value="UniProtKB-UniRule"/>
</dbReference>
<dbReference type="Gene3D" id="3.40.390.30">
    <property type="entry name" value="Metalloproteases ('zincins'), catalytic domain"/>
    <property type="match status" value="1"/>
</dbReference>
<dbReference type="HAMAP" id="MF_00009">
    <property type="entry name" value="Endoribonucl_YbeY"/>
    <property type="match status" value="1"/>
</dbReference>
<dbReference type="InterPro" id="IPR023091">
    <property type="entry name" value="MetalPrtase_cat_dom_sf_prd"/>
</dbReference>
<dbReference type="InterPro" id="IPR002036">
    <property type="entry name" value="YbeY"/>
</dbReference>
<dbReference type="NCBIfam" id="TIGR00043">
    <property type="entry name" value="rRNA maturation RNase YbeY"/>
    <property type="match status" value="1"/>
</dbReference>
<dbReference type="PANTHER" id="PTHR46986">
    <property type="entry name" value="ENDORIBONUCLEASE YBEY, CHLOROPLASTIC"/>
    <property type="match status" value="1"/>
</dbReference>
<dbReference type="PANTHER" id="PTHR46986:SF1">
    <property type="entry name" value="ENDORIBONUCLEASE YBEY, CHLOROPLASTIC"/>
    <property type="match status" value="1"/>
</dbReference>
<dbReference type="Pfam" id="PF02130">
    <property type="entry name" value="YbeY"/>
    <property type="match status" value="1"/>
</dbReference>
<dbReference type="SUPFAM" id="SSF55486">
    <property type="entry name" value="Metalloproteases ('zincins'), catalytic domain"/>
    <property type="match status" value="1"/>
</dbReference>
<keyword id="KW-0963">Cytoplasm</keyword>
<keyword id="KW-0255">Endonuclease</keyword>
<keyword id="KW-0378">Hydrolase</keyword>
<keyword id="KW-0479">Metal-binding</keyword>
<keyword id="KW-0540">Nuclease</keyword>
<keyword id="KW-1185">Reference proteome</keyword>
<keyword id="KW-0690">Ribosome biogenesis</keyword>
<keyword id="KW-0698">rRNA processing</keyword>
<keyword id="KW-0862">Zinc</keyword>
<proteinExistence type="inferred from homology"/>